<evidence type="ECO:0000250" key="1"/>
<evidence type="ECO:0000255" key="2">
    <source>
        <dbReference type="PROSITE-ProRule" id="PRU00881"/>
    </source>
</evidence>
<evidence type="ECO:0000256" key="3">
    <source>
        <dbReference type="SAM" id="MobiDB-lite"/>
    </source>
</evidence>
<evidence type="ECO:0000305" key="4"/>
<evidence type="ECO:0007829" key="5">
    <source>
        <dbReference type="PDB" id="6SI6"/>
    </source>
</evidence>
<comment type="function">
    <text evidence="1">Capsid protein VP2 self assembles to form an icosahedral capsid with a T=13 symmetry, about 70 nm in diameter, and consisting of 260 VP2 trimers. The capsid encapsulates the genomic dsRNA. VP2 is also involved in attachment and entry into the host cell (By similarity).</text>
</comment>
<comment type="function">
    <text evidence="1">The precursor of VP2 plays an important role in capsid assembly. First, pre-VP2 and VP2 oligomers assemble to form a procapsid. Then, the pre-VP2 intermediates may be processed into VP2 proteins by proteolytic cleavage mediated by VP4 to obtain the mature virion. The final capsid is composed of pentamers and hexamers but VP2 has a natural tendency to assemble into all-pentameric structures. Therefore pre-VP2 may be required to allow formation of the hexameric structures (By similarity).</text>
</comment>
<comment type="function">
    <text evidence="2">Protease VP4 is a serine protease that cleaves the polyprotein into its final products. Pre-VP2 is first partially cleaved, and may be completely processed by VP4 upon capsid maturation.</text>
</comment>
<comment type="function">
    <text evidence="1">Capsid protein VP3 plays a key role in virion assembly by providing a scaffold for the capsid made of VP2. May self-assemble to form a T=4-like icosahedral inner-capsid composed of at least 180 trimers. Plays a role in genomic RNA packaging by recruiting VP1 into the capsid and interacting with the dsRNA genome segments to form a ribonucleoprotein complex. Additionally, the interaction of the VP3 C-terminal tail with VP1 removes the inherent structural blockade of the polymerase active site. Thus, VP3 can also function as a transcriptional activator (By similarity).</text>
</comment>
<comment type="function">
    <text evidence="1">Structural peptide 1 is a small peptide derived from pre-VP2 C-terminus. It destabilizes and perforates cell membranes, suggesting a role during entry (By similarity).</text>
</comment>
<comment type="function">
    <text evidence="1">Structural peptide 2 is a small peptide derived from pre-VP2 C-terminus. It is not essential for the virus viability, but viral growth is affected when missing (By similarity).</text>
</comment>
<comment type="function">
    <text evidence="1">Structural peptide 3 is a small peptide derived from pre-VP2 C-terminus. It is not essential for the virus viability, but viral growth is affected when missing (By similarity).</text>
</comment>
<comment type="subunit">
    <molecule>Capsid protein VP2</molecule>
    <text evidence="1 4">Homotrimer. A central divalent metal stabilizes the VP2 trimer (By similarity).</text>
</comment>
<comment type="subunit">
    <molecule>Capsid protein VP3</molecule>
    <text evidence="1">Homodimer. Interacts (via C-terminus) with VP1 in the cytoplasm. Capsid VP3 interacts with VP2 (By similarity).</text>
</comment>
<comment type="subcellular location">
    <molecule>Capsid protein VP2</molecule>
    <subcellularLocation>
        <location evidence="4">Virion</location>
    </subcellularLocation>
    <subcellularLocation>
        <location evidence="4">Host cytoplasm</location>
    </subcellularLocation>
</comment>
<comment type="subcellular location">
    <molecule>Capsid protein VP3</molecule>
    <subcellularLocation>
        <location evidence="4">Virion</location>
    </subcellularLocation>
    <subcellularLocation>
        <location evidence="4">Host cytoplasm</location>
    </subcellularLocation>
</comment>
<comment type="subcellular location">
    <molecule>Structural peptide 1</molecule>
    <subcellularLocation>
        <location evidence="4">Virion</location>
    </subcellularLocation>
    <subcellularLocation>
        <location evidence="4">Host cytoplasm</location>
    </subcellularLocation>
</comment>
<comment type="subcellular location">
    <molecule>Structural peptide 2</molecule>
    <subcellularLocation>
        <location evidence="4">Virion</location>
    </subcellularLocation>
    <subcellularLocation>
        <location evidence="4">Host cytoplasm</location>
    </subcellularLocation>
</comment>
<comment type="subcellular location">
    <molecule>Structural peptide 3</molecule>
    <subcellularLocation>
        <location evidence="4">Virion</location>
    </subcellularLocation>
    <subcellularLocation>
        <location evidence="4">Host cytoplasm</location>
    </subcellularLocation>
</comment>
<comment type="PTM">
    <text evidence="1">Specific enzymatic cleavages yield mature proteins. The capsid assembly seems to be regulated by polyprotein processing. The protease VP4 cleaves itself off the polyprotein, thus releasing pre-VP2 and VP3 within the infected cell. During capsid assembly, the C-terminus of pre-VP2 is further processed by VP4, giving rise to VP2, the external capsid protein and three small peptides that all stay closely associated with the capsid (By similarity).</text>
</comment>
<sequence>MNTTNEYLKTLLNPAQFISDIPDDIMIRHVNSAQTITYNLKSGASGTGLIVVYPNTPSSISGFHYIWDSATSNWVFDQYIYTAQELKDSYDYGRLISGSLSIKSSTLPAGVYALNGTFNAVWFQGTLSEVSDYSYDRILSITSNPLDKVGNVLVGDGIEVLSLPQGFNNPYVRLGDKSPSTLSSPTHITNTSQNLATGGAYMIPVTTVPGQGFHNKEFSINVDSVGPVDILWSGQMTMQDEWTVTANYQPLNISGTLIANSQRTLTWSNTGVSNGSHYMNMNNLNVSLFHENPPPEPVAAIKININYGNNTNGDSSFSVDSSFTINVIGGATIGVNSPTVGVGYQGVAEGTAITISGINNYELVPNPDLQKNLPMTYGTCDPHDLTYIKYILSNREQLGLRSVMTLADYNRMKMYMHVLTNYHVDEREASSFDFWQLLKQIKNVAVPLAATLAPQFAPIIGAADGLANAILGDSASGRPVGNSASGMPISMSRRLRNAYSADSPLGEEHWLPNENENFNKFDIIYDVSHSSMALFPVIMMEHDKVIPSDPEELYIAVSLTESLRKQIPNLNDMPYYEMGGHRVYNSVSSNVRSGNFLRSDYILLPCYQLLEGRLASSTSPNKVTGTSHQLAIYAADDLLKSGVLGKAPFAAFTGSVVGSSVGEVFGINLKLQLTDSLGIPLLGNSPGLVQVKTLTSLDKKIKDMGDVKRRTPKQTLPHWTAGSASMNPFMNTNPFLEELDQPIPSNAAKPISEETRDLFLSDGQTIPSSQEKIATIHEYLLEHKELEEAMFSLISQGRGRSLINMVVKSALNIETQSREVTGERRQRLERKLRNLENQGIYVDESKIMSRGRISKEDTELAMRIARKNQKDAKLRRIYSNNASIQESYTVDDFVSYWMEQESLPTGIQIAMWLKGDDWSQPIPPRVQRRHYDSYIMMLGPSPTQEQADAVKDLVDDIYDRNQGKGPSQEQARELSHAVRRLISHSLVNQPATAPRVPPRRIVSAQTAQTDPPGRRAALDRLRRVRGEDNDIV</sequence>
<dbReference type="EC" id="3.4.21.-"/>
<dbReference type="EMBL" id="U60650">
    <property type="protein sequence ID" value="AAB16798.1"/>
    <property type="molecule type" value="Genomic_RNA"/>
</dbReference>
<dbReference type="RefSeq" id="NP_690836.1">
    <property type="nucleotide sequence ID" value="NC_004177.1"/>
</dbReference>
<dbReference type="PDB" id="6SHW">
    <property type="method" value="X-ray"/>
    <property type="resolution" value="2.00 A"/>
    <property type="chains" value="A=724-1032"/>
</dbReference>
<dbReference type="PDB" id="6SI6">
    <property type="method" value="X-ray"/>
    <property type="resolution" value="1.98 A"/>
    <property type="chains" value="A/B=725-1032"/>
</dbReference>
<dbReference type="PDBsum" id="6SHW"/>
<dbReference type="PDBsum" id="6SI6"/>
<dbReference type="SMR" id="Q96724"/>
<dbReference type="MEROPS" id="S50.003"/>
<dbReference type="GeneID" id="993338"/>
<dbReference type="KEGG" id="vg:993338"/>
<dbReference type="Proteomes" id="UP000000515">
    <property type="component" value="Genome"/>
</dbReference>
<dbReference type="GO" id="GO:0030430">
    <property type="term" value="C:host cell cytoplasm"/>
    <property type="evidence" value="ECO:0007669"/>
    <property type="project" value="UniProtKB-SubCell"/>
</dbReference>
<dbReference type="GO" id="GO:0039621">
    <property type="term" value="C:T=13 icosahedral viral capsid"/>
    <property type="evidence" value="ECO:0007669"/>
    <property type="project" value="UniProtKB-KW"/>
</dbReference>
<dbReference type="GO" id="GO:0046872">
    <property type="term" value="F:metal ion binding"/>
    <property type="evidence" value="ECO:0007669"/>
    <property type="project" value="UniProtKB-KW"/>
</dbReference>
<dbReference type="GO" id="GO:0008236">
    <property type="term" value="F:serine-type peptidase activity"/>
    <property type="evidence" value="ECO:0007669"/>
    <property type="project" value="UniProtKB-KW"/>
</dbReference>
<dbReference type="GO" id="GO:0005198">
    <property type="term" value="F:structural molecule activity"/>
    <property type="evidence" value="ECO:0007669"/>
    <property type="project" value="InterPro"/>
</dbReference>
<dbReference type="GO" id="GO:0006508">
    <property type="term" value="P:proteolysis"/>
    <property type="evidence" value="ECO:0007669"/>
    <property type="project" value="UniProtKB-KW"/>
</dbReference>
<dbReference type="Gene3D" id="2.60.120.20">
    <property type="match status" value="1"/>
</dbReference>
<dbReference type="Gene3D" id="6.10.250.1030">
    <property type="match status" value="1"/>
</dbReference>
<dbReference type="Gene3D" id="2.60.120.660">
    <property type="entry name" value="icosahedral virus"/>
    <property type="match status" value="1"/>
</dbReference>
<dbReference type="InterPro" id="IPR002662">
    <property type="entry name" value="Birna_VP2"/>
</dbReference>
<dbReference type="InterPro" id="IPR002663">
    <property type="entry name" value="Birna_VP3"/>
</dbReference>
<dbReference type="InterPro" id="IPR025775">
    <property type="entry name" value="Birna_VP4_Prtase_dom"/>
</dbReference>
<dbReference type="InterPro" id="IPR029053">
    <property type="entry name" value="Viral_coat"/>
</dbReference>
<dbReference type="Pfam" id="PF01766">
    <property type="entry name" value="Birna_VP2"/>
    <property type="match status" value="1"/>
</dbReference>
<dbReference type="Pfam" id="PF01767">
    <property type="entry name" value="Birna_VP3"/>
    <property type="match status" value="1"/>
</dbReference>
<dbReference type="Pfam" id="PF01768">
    <property type="entry name" value="Birna_VP4"/>
    <property type="match status" value="1"/>
</dbReference>
<dbReference type="SUPFAM" id="SSF88633">
    <property type="entry name" value="Positive stranded ssRNA viruses"/>
    <property type="match status" value="1"/>
</dbReference>
<dbReference type="PROSITE" id="PS51548">
    <property type="entry name" value="BIRNAVIRUS_VP4_PRO"/>
    <property type="match status" value="1"/>
</dbReference>
<organismHost>
    <name type="scientific">Drosophila melanogaster</name>
    <name type="common">Fruit fly</name>
    <dbReference type="NCBI Taxonomy" id="7227"/>
</organismHost>
<proteinExistence type="evidence at protein level"/>
<accession>Q96724</accession>
<name>POLS_DXV96</name>
<keyword id="KW-0002">3D-structure</keyword>
<keyword id="KW-0167">Capsid protein</keyword>
<keyword id="KW-1035">Host cytoplasm</keyword>
<keyword id="KW-0378">Hydrolase</keyword>
<keyword id="KW-0479">Metal-binding</keyword>
<keyword id="KW-0645">Protease</keyword>
<keyword id="KW-1185">Reference proteome</keyword>
<keyword id="KW-0720">Serine protease</keyword>
<keyword id="KW-1146">T=13 icosahedral capsid protein</keyword>
<keyword id="KW-0946">Virion</keyword>
<reference key="1">
    <citation type="journal article" date="1996" name="Virology">
        <title>Sequence analysis of the bicistronic Drosophila X virus genome segment A and its encoded polypeptides.</title>
        <authorList>
            <person name="Chung H.K."/>
            <person name="Kordyban S."/>
            <person name="Cameron L."/>
            <person name="Dobos P."/>
        </authorList>
    </citation>
    <scope>NUCLEOTIDE SEQUENCE [GENOMIC RNA]</scope>
</reference>
<protein>
    <recommendedName>
        <fullName>Structural polyprotein</fullName>
        <shortName>PP</shortName>
    </recommendedName>
    <component>
        <recommendedName>
            <fullName>Precursor of VP2</fullName>
            <shortName>pre-VP2</shortName>
        </recommendedName>
    </component>
    <component>
        <recommendedName>
            <fullName>Capsid protein VP2</fullName>
        </recommendedName>
    </component>
    <component>
        <recommendedName>
            <fullName>Structural peptide 1</fullName>
            <shortName>p1</shortName>
        </recommendedName>
    </component>
    <component>
        <recommendedName>
            <fullName>Structural peptide 2</fullName>
            <shortName>p2</shortName>
        </recommendedName>
    </component>
    <component>
        <recommendedName>
            <fullName>Structural peptide 3</fullName>
            <shortName>p3</shortName>
        </recommendedName>
    </component>
    <component>
        <recommendedName>
            <fullName>Protease VP4</fullName>
            <ecNumber>3.4.21.-</ecNumber>
        </recommendedName>
        <alternativeName>
            <fullName>Non-structural protein VP4</fullName>
            <shortName>NS</shortName>
        </alternativeName>
    </component>
    <component>
        <recommendedName>
            <fullName>Capsid protein VP3</fullName>
        </recommendedName>
    </component>
</protein>
<feature type="chain" id="PRO_0000378376" description="Structural polyprotein">
    <location>
        <begin position="1"/>
        <end position="1032"/>
    </location>
</feature>
<feature type="chain" id="PRO_0000378377" description="Precursor of VP2">
    <location>
        <begin position="1"/>
        <end position="500"/>
    </location>
</feature>
<feature type="chain" id="PRO_0000378378" description="Capsid protein VP2">
    <location>
        <begin position="1"/>
        <end position="431"/>
    </location>
</feature>
<feature type="peptide" id="PRO_0000378379" description="Structural peptide 1" evidence="1">
    <location>
        <begin position="431"/>
        <end position="474"/>
    </location>
</feature>
<feature type="peptide" id="PRO_0000378380" description="Structural peptide 2" evidence="1">
    <location>
        <begin position="475"/>
        <end position="483"/>
    </location>
</feature>
<feature type="peptide" id="PRO_0000378381" description="Structural peptide 3" evidence="1">
    <location>
        <begin position="484"/>
        <end position="500"/>
    </location>
</feature>
<feature type="chain" id="PRO_0000378382" description="Protease VP4">
    <location>
        <begin position="501"/>
        <end position="723"/>
    </location>
</feature>
<feature type="chain" id="PRO_0000378383" description="Capsid protein VP3">
    <location>
        <begin position="724"/>
        <end position="1032"/>
    </location>
</feature>
<feature type="domain" description="Peptidase S50" evidence="2">
    <location>
        <begin position="501"/>
        <end position="723"/>
    </location>
</feature>
<feature type="region of interest" description="Disordered" evidence="3">
    <location>
        <begin position="986"/>
        <end position="1014"/>
    </location>
</feature>
<feature type="region of interest" description="Interaction with VP1 protein" evidence="1">
    <location>
        <begin position="1021"/>
        <end position="1030"/>
    </location>
</feature>
<feature type="active site" description="Nucleophile" evidence="2">
    <location>
        <position position="627"/>
    </location>
</feature>
<feature type="active site" evidence="2">
    <location>
        <position position="670"/>
    </location>
</feature>
<feature type="binding site" evidence="1">
    <location>
        <position position="23"/>
    </location>
    <ligand>
        <name>a divalent metal cation</name>
        <dbReference type="ChEBI" id="CHEBI:60240"/>
        <note>ligand shared between trimeric partners</note>
    </ligand>
</feature>
<feature type="site" description="Cleavage; by protease VP4" evidence="1">
    <location>
        <begin position="431"/>
        <end position="432"/>
    </location>
</feature>
<feature type="site" description="Cleavage; by protease VP4" evidence="1">
    <location>
        <begin position="474"/>
        <end position="475"/>
    </location>
</feature>
<feature type="site" description="Cleavage; by protease VP4" evidence="1">
    <location>
        <begin position="483"/>
        <end position="484"/>
    </location>
</feature>
<feature type="site" description="Cleavage; by protease VP4" evidence="1">
    <location>
        <begin position="500"/>
        <end position="501"/>
    </location>
</feature>
<feature type="site" description="Cleavage; by protease VP4" evidence="1">
    <location>
        <begin position="723"/>
        <end position="724"/>
    </location>
</feature>
<feature type="helix" evidence="5">
    <location>
        <begin position="769"/>
        <end position="782"/>
    </location>
</feature>
<feature type="helix" evidence="5">
    <location>
        <begin position="784"/>
        <end position="795"/>
    </location>
</feature>
<feature type="helix" evidence="5">
    <location>
        <begin position="799"/>
        <end position="812"/>
    </location>
</feature>
<organism>
    <name type="scientific">Drosophila x virus (isolate Chung/1996)</name>
    <name type="common">DXV</name>
    <dbReference type="NCBI Taxonomy" id="654931"/>
    <lineage>
        <taxon>Viruses</taxon>
        <taxon>Riboviria</taxon>
        <taxon>Orthornavirae</taxon>
        <taxon>Birnaviridae</taxon>
        <taxon>Entomobirnavirus</taxon>
        <taxon>Entomobirnavirus drosophilae</taxon>
    </lineage>
</organism>